<organism>
    <name type="scientific">Staphylococcus epidermidis (strain ATCC 12228 / FDA PCI 1200)</name>
    <dbReference type="NCBI Taxonomy" id="176280"/>
    <lineage>
        <taxon>Bacteria</taxon>
        <taxon>Bacillati</taxon>
        <taxon>Bacillota</taxon>
        <taxon>Bacilli</taxon>
        <taxon>Bacillales</taxon>
        <taxon>Staphylococcaceae</taxon>
        <taxon>Staphylococcus</taxon>
    </lineage>
</organism>
<name>SCPA_STAES</name>
<protein>
    <recommendedName>
        <fullName evidence="1">Segregation and condensation protein A</fullName>
    </recommendedName>
</protein>
<proteinExistence type="inferred from homology"/>
<dbReference type="EMBL" id="AE015929">
    <property type="protein sequence ID" value="AAO04778.1"/>
    <property type="status" value="ALT_INIT"/>
    <property type="molecule type" value="Genomic_DNA"/>
</dbReference>
<dbReference type="RefSeq" id="NP_764734.1">
    <property type="nucleotide sequence ID" value="NC_004461.1"/>
</dbReference>
<dbReference type="RefSeq" id="WP_001831064.1">
    <property type="nucleotide sequence ID" value="NZ_WBME01000006.1"/>
</dbReference>
<dbReference type="SMR" id="Q8CSH0"/>
<dbReference type="KEGG" id="sep:SE_1179"/>
<dbReference type="PATRIC" id="fig|176280.10.peg.1150"/>
<dbReference type="eggNOG" id="COG1354">
    <property type="taxonomic scope" value="Bacteria"/>
</dbReference>
<dbReference type="HOGENOM" id="CLU_038686_3_1_9"/>
<dbReference type="OrthoDB" id="9811016at2"/>
<dbReference type="Proteomes" id="UP000001411">
    <property type="component" value="Chromosome"/>
</dbReference>
<dbReference type="GO" id="GO:0005737">
    <property type="term" value="C:cytoplasm"/>
    <property type="evidence" value="ECO:0007669"/>
    <property type="project" value="UniProtKB-SubCell"/>
</dbReference>
<dbReference type="GO" id="GO:0051301">
    <property type="term" value="P:cell division"/>
    <property type="evidence" value="ECO:0007669"/>
    <property type="project" value="UniProtKB-KW"/>
</dbReference>
<dbReference type="GO" id="GO:0007059">
    <property type="term" value="P:chromosome segregation"/>
    <property type="evidence" value="ECO:0007669"/>
    <property type="project" value="UniProtKB-UniRule"/>
</dbReference>
<dbReference type="GO" id="GO:0006260">
    <property type="term" value="P:DNA replication"/>
    <property type="evidence" value="ECO:0007669"/>
    <property type="project" value="UniProtKB-UniRule"/>
</dbReference>
<dbReference type="Gene3D" id="6.10.250.2410">
    <property type="match status" value="1"/>
</dbReference>
<dbReference type="Gene3D" id="1.10.10.580">
    <property type="entry name" value="Structural maintenance of chromosome 1. Chain E"/>
    <property type="match status" value="1"/>
</dbReference>
<dbReference type="HAMAP" id="MF_01805">
    <property type="entry name" value="ScpA"/>
    <property type="match status" value="1"/>
</dbReference>
<dbReference type="InterPro" id="IPR003768">
    <property type="entry name" value="ScpA"/>
</dbReference>
<dbReference type="InterPro" id="IPR023093">
    <property type="entry name" value="ScpA-like_C"/>
</dbReference>
<dbReference type="PANTHER" id="PTHR33969">
    <property type="entry name" value="SEGREGATION AND CONDENSATION PROTEIN A"/>
    <property type="match status" value="1"/>
</dbReference>
<dbReference type="PANTHER" id="PTHR33969:SF2">
    <property type="entry name" value="SEGREGATION AND CONDENSATION PROTEIN A"/>
    <property type="match status" value="1"/>
</dbReference>
<dbReference type="Pfam" id="PF02616">
    <property type="entry name" value="SMC_ScpA"/>
    <property type="match status" value="1"/>
</dbReference>
<feature type="chain" id="PRO_0000211106" description="Segregation and condensation protein A">
    <location>
        <begin position="1"/>
        <end position="243"/>
    </location>
</feature>
<gene>
    <name evidence="1" type="primary">scpA</name>
    <name type="ordered locus">SE_1179</name>
</gene>
<sequence length="243" mass="28575">MYEVKLDAFNGPLDLLLHLIQKYEIDIYDIPMKALTEQYMQYVHAMNQLEINVASEYLVMASELLMIKSKLLLPQTSIEEDIEEDPREDLVGRLIEYQNYKEYTEILNTMKEERDLYFTKHPTDLTHLETNESWDPNQTIDLTELIVAYQRVKNRVELNTPKSVEIKKETFTIQQATAQVTERLKQHESFNFFSLFTFHEPVEQVVTHFLAILEMSKSGIVNIKQTKQFDDIDIIRGVNYSIG</sequence>
<keyword id="KW-0131">Cell cycle</keyword>
<keyword id="KW-0132">Cell division</keyword>
<keyword id="KW-0159">Chromosome partition</keyword>
<keyword id="KW-0963">Cytoplasm</keyword>
<evidence type="ECO:0000255" key="1">
    <source>
        <dbReference type="HAMAP-Rule" id="MF_01805"/>
    </source>
</evidence>
<evidence type="ECO:0000305" key="2"/>
<reference key="1">
    <citation type="journal article" date="2003" name="Mol. Microbiol.">
        <title>Genome-based analysis of virulence genes in a non-biofilm-forming Staphylococcus epidermidis strain (ATCC 12228).</title>
        <authorList>
            <person name="Zhang Y.-Q."/>
            <person name="Ren S.-X."/>
            <person name="Li H.-L."/>
            <person name="Wang Y.-X."/>
            <person name="Fu G."/>
            <person name="Yang J."/>
            <person name="Qin Z.-Q."/>
            <person name="Miao Y.-G."/>
            <person name="Wang W.-Y."/>
            <person name="Chen R.-S."/>
            <person name="Shen Y."/>
            <person name="Chen Z."/>
            <person name="Yuan Z.-H."/>
            <person name="Zhao G.-P."/>
            <person name="Qu D."/>
            <person name="Danchin A."/>
            <person name="Wen Y.-M."/>
        </authorList>
    </citation>
    <scope>NUCLEOTIDE SEQUENCE [LARGE SCALE GENOMIC DNA]</scope>
    <source>
        <strain>ATCC 12228 / FDA PCI 1200</strain>
    </source>
</reference>
<comment type="function">
    <text evidence="1">Participates in chromosomal partition during cell division. May act via the formation of a condensin-like complex containing Smc and ScpB that pull DNA away from mid-cell into both cell halves.</text>
</comment>
<comment type="subunit">
    <text evidence="1">Component of a cohesin-like complex composed of ScpA, ScpB and the Smc homodimer, in which ScpA and ScpB bind to the head domain of Smc. The presence of the three proteins is required for the association of the complex with DNA.</text>
</comment>
<comment type="subcellular location">
    <subcellularLocation>
        <location evidence="1">Cytoplasm</location>
    </subcellularLocation>
    <text evidence="1">Associated with two foci at the outer edges of the nucleoid region in young cells, and at four foci within both cell halves in older cells.</text>
</comment>
<comment type="similarity">
    <text evidence="1">Belongs to the ScpA family.</text>
</comment>
<comment type="sequence caution" evidence="2">
    <conflict type="erroneous initiation">
        <sequence resource="EMBL-CDS" id="AAO04778"/>
    </conflict>
</comment>
<accession>Q8CSH0</accession>